<accession>Q95NT6</accession>
<accession>Q95PK5</accession>
<accession>Q95PK6</accession>
<accession>Q95PK7</accession>
<accession>Q95WT7</accession>
<sequence length="536" mass="61768">MAERDHYHTIDDPNVPCNFYDTVNLTGHTVFPNGSYDYYGTIVPAELVGTYDYIHSSLTERIEVREHVRGCVCKFKSCLNICCPWRQVFNSEVDGCIIDHSDNRTWPDPPMLNITFRNDSTILVNMFAQFAIQSFRPCPKMFSLQPETSHWDDYLLFENGSMLRVDDQQLIRKNEFCMVPTYVNESDMFYTIHPANCDMQDDNSTVKIINAYAMMFSIPFMMLTIAVYLLIPELRNQHGKSLVCYLVGLTVGYTSLCYVQLYQVDATGDACKVFGYTAYFFFMGAYMWLSVISFDLWHNFRGTRGINRFQEKKRFLFYSLYSWGIAVVFLAFTYIAQELTNLPAYLKPGIGDGVYCWLDMSNWAAMIYFYGPILVIVVANTIMFIMTAIKIHGVQREMARIIASENSTKNLRTEKDKFGLFLRLFLIMGITWLTELISYFVGSDKGWSKLFYISDLANAMQGFLIFMLFVMKKKVKHLITNRCSSVRDGSNQRQSQYSTKTTSSSVANLSLHEKPSVEKPLVISSSVDPQKTTIFR</sequence>
<organism evidence="6">
    <name type="scientific">Drosophila yakuba</name>
    <name type="common">Fruit fly</name>
    <dbReference type="NCBI Taxonomy" id="7245"/>
    <lineage>
        <taxon>Eukaryota</taxon>
        <taxon>Metazoa</taxon>
        <taxon>Ecdysozoa</taxon>
        <taxon>Arthropoda</taxon>
        <taxon>Hexapoda</taxon>
        <taxon>Insecta</taxon>
        <taxon>Pterygota</taxon>
        <taxon>Neoptera</taxon>
        <taxon>Endopterygota</taxon>
        <taxon>Diptera</taxon>
        <taxon>Brachycera</taxon>
        <taxon>Muscomorpha</taxon>
        <taxon>Ephydroidea</taxon>
        <taxon>Drosophilidae</taxon>
        <taxon>Drosophila</taxon>
        <taxon>Sophophora</taxon>
    </lineage>
</organism>
<comment type="function">
    <text evidence="1">Involved in biological aging and stress response. Essential for adult survival (By similarity).</text>
</comment>
<comment type="subunit">
    <text evidence="1">Homodimer.</text>
</comment>
<comment type="subcellular location">
    <subcellularLocation>
        <location evidence="4">Cell membrane</location>
        <topology evidence="4">Multi-pass membrane protein</topology>
    </subcellularLocation>
</comment>
<comment type="similarity">
    <text evidence="4">Belongs to the G-protein coupled receptor 2 family. Mth subfamily.</text>
</comment>
<gene>
    <name type="primary">mth2</name>
</gene>
<proteinExistence type="inferred from homology"/>
<reference evidence="4" key="1">
    <citation type="journal article" date="2003" name="Mol. Ecol.">
        <title>Clines and adaptive evolution in the methuselah gene region in Drosophila melanogaster.</title>
        <authorList>
            <person name="Duvernell D.D."/>
            <person name="Schmidt P.S."/>
            <person name="Eanes W.F."/>
        </authorList>
    </citation>
    <scope>NUCLEOTIDE SEQUENCE [GENOMIC DNA]</scope>
    <source>
        <strain evidence="5">BG1013</strain>
        <strain>Yak_2</strain>
        <strain>Yak_23</strain>
        <strain>Yak_30</strain>
        <strain>Yak_4</strain>
        <strain>Yak_5</strain>
        <strain>Yak_8</strain>
    </source>
</reference>
<feature type="signal peptide" evidence="2">
    <location>
        <begin position="1"/>
        <end status="unknown"/>
    </location>
</feature>
<feature type="chain" id="PRO_0000013033" description="G-protein coupled receptor Mth2">
    <location>
        <begin status="unknown"/>
        <end position="536"/>
    </location>
</feature>
<feature type="topological domain" description="Extracellular" evidence="2">
    <location>
        <begin position="1"/>
        <end position="210"/>
    </location>
</feature>
<feature type="transmembrane region" description="Helical; Name=1" evidence="2">
    <location>
        <begin position="211"/>
        <end position="231"/>
    </location>
</feature>
<feature type="topological domain" description="Cytoplasmic" evidence="2">
    <location>
        <begin position="232"/>
        <end position="241"/>
    </location>
</feature>
<feature type="transmembrane region" description="Helical; Name=2" evidence="2">
    <location>
        <begin position="242"/>
        <end position="262"/>
    </location>
</feature>
<feature type="topological domain" description="Extracellular" evidence="2">
    <location>
        <begin position="263"/>
        <end position="273"/>
    </location>
</feature>
<feature type="transmembrane region" description="Helical; Name=3" evidence="2">
    <location>
        <begin position="274"/>
        <end position="294"/>
    </location>
</feature>
<feature type="topological domain" description="Cytoplasmic" evidence="2">
    <location>
        <begin position="295"/>
        <end position="314"/>
    </location>
</feature>
<feature type="transmembrane region" description="Helical; Name=4" evidence="2">
    <location>
        <begin position="315"/>
        <end position="335"/>
    </location>
</feature>
<feature type="topological domain" description="Extracellular" evidence="2">
    <location>
        <begin position="336"/>
        <end position="365"/>
    </location>
</feature>
<feature type="transmembrane region" description="Helical; Name=5" evidence="2">
    <location>
        <begin position="366"/>
        <end position="386"/>
    </location>
</feature>
<feature type="topological domain" description="Cytoplasmic" evidence="2">
    <location>
        <begin position="387"/>
        <end position="417"/>
    </location>
</feature>
<feature type="transmembrane region" description="Helical; Name=6" evidence="2">
    <location>
        <begin position="418"/>
        <end position="438"/>
    </location>
</feature>
<feature type="topological domain" description="Extracellular" evidence="2">
    <location>
        <begin position="439"/>
        <end position="449"/>
    </location>
</feature>
<feature type="transmembrane region" description="Helical; Name=7" evidence="2">
    <location>
        <begin position="450"/>
        <end position="470"/>
    </location>
</feature>
<feature type="topological domain" description="Cytoplasmic" evidence="2">
    <location>
        <begin position="471"/>
        <end position="536"/>
    </location>
</feature>
<feature type="region of interest" description="Disordered" evidence="3">
    <location>
        <begin position="487"/>
        <end position="506"/>
    </location>
</feature>
<feature type="compositionally biased region" description="Low complexity" evidence="3">
    <location>
        <begin position="492"/>
        <end position="505"/>
    </location>
</feature>
<feature type="glycosylation site" description="N-linked (GlcNAc...) asparagine" evidence="2">
    <location>
        <position position="24"/>
    </location>
</feature>
<feature type="glycosylation site" description="N-linked (GlcNAc...) asparagine" evidence="2">
    <location>
        <position position="33"/>
    </location>
</feature>
<feature type="glycosylation site" description="N-linked (GlcNAc...) asparagine" evidence="2">
    <location>
        <position position="103"/>
    </location>
</feature>
<feature type="glycosylation site" description="N-linked (GlcNAc...) asparagine" evidence="2">
    <location>
        <position position="113"/>
    </location>
</feature>
<feature type="glycosylation site" description="N-linked (GlcNAc...) asparagine" evidence="2">
    <location>
        <position position="118"/>
    </location>
</feature>
<feature type="glycosylation site" description="N-linked (GlcNAc...) asparagine" evidence="2">
    <location>
        <position position="159"/>
    </location>
</feature>
<feature type="glycosylation site" description="N-linked (GlcNAc...) asparagine" evidence="2">
    <location>
        <position position="184"/>
    </location>
</feature>
<feature type="glycosylation site" description="N-linked (GlcNAc...) asparagine" evidence="2">
    <location>
        <position position="203"/>
    </location>
</feature>
<feature type="disulfide bond" evidence="1">
    <location>
        <begin position="17"/>
        <end position="71"/>
    </location>
</feature>
<feature type="disulfide bond" evidence="1">
    <location>
        <begin position="73"/>
        <end position="78"/>
    </location>
</feature>
<feature type="disulfide bond" evidence="1">
    <location>
        <begin position="82"/>
        <end position="177"/>
    </location>
</feature>
<feature type="disulfide bond" evidence="1">
    <location>
        <begin position="83"/>
        <end position="96"/>
    </location>
</feature>
<feature type="disulfide bond" evidence="1">
    <location>
        <begin position="138"/>
        <end position="197"/>
    </location>
</feature>
<feature type="sequence variant" description="In strain: Yak_5.">
    <original>N</original>
    <variation>K</variation>
    <location>
        <position position="481"/>
    </location>
</feature>
<feature type="sequence variant" description="In strain: Yak_4 and Yak_8.">
    <original>S</original>
    <variation>N</variation>
    <location>
        <position position="526"/>
    </location>
</feature>
<evidence type="ECO:0000250" key="1">
    <source>
        <dbReference type="UniProtKB" id="O97148"/>
    </source>
</evidence>
<evidence type="ECO:0000255" key="2"/>
<evidence type="ECO:0000256" key="3">
    <source>
        <dbReference type="SAM" id="MobiDB-lite"/>
    </source>
</evidence>
<evidence type="ECO:0000305" key="4"/>
<evidence type="ECO:0000312" key="5">
    <source>
        <dbReference type="EMBL" id="AAK97892.1"/>
    </source>
</evidence>
<evidence type="ECO:0000312" key="6">
    <source>
        <dbReference type="EMBL" id="AAK97894.1"/>
    </source>
</evidence>
<protein>
    <recommendedName>
        <fullName>G-protein coupled receptor Mth2</fullName>
    </recommendedName>
    <alternativeName>
        <fullName>Protein methuselah-2</fullName>
    </alternativeName>
</protein>
<keyword id="KW-1003">Cell membrane</keyword>
<keyword id="KW-1015">Disulfide bond</keyword>
<keyword id="KW-0297">G-protein coupled receptor</keyword>
<keyword id="KW-0325">Glycoprotein</keyword>
<keyword id="KW-0472">Membrane</keyword>
<keyword id="KW-0675">Receptor</keyword>
<keyword id="KW-0732">Signal</keyword>
<keyword id="KW-0807">Transducer</keyword>
<keyword id="KW-0812">Transmembrane</keyword>
<keyword id="KW-1133">Transmembrane helix</keyword>
<dbReference type="EMBL" id="AF300410">
    <property type="protein sequence ID" value="AAK97892.1"/>
    <property type="molecule type" value="Genomic_DNA"/>
</dbReference>
<dbReference type="EMBL" id="AF300409">
    <property type="protein sequence ID" value="AAK97892.1"/>
    <property type="status" value="JOINED"/>
    <property type="molecule type" value="Genomic_DNA"/>
</dbReference>
<dbReference type="EMBL" id="AF300412">
    <property type="protein sequence ID" value="AAK97893.1"/>
    <property type="molecule type" value="Genomic_DNA"/>
</dbReference>
<dbReference type="EMBL" id="AF300411">
    <property type="protein sequence ID" value="AAK97893.1"/>
    <property type="status" value="JOINED"/>
    <property type="molecule type" value="Genomic_DNA"/>
</dbReference>
<dbReference type="EMBL" id="AF300414">
    <property type="protein sequence ID" value="AAK97894.1"/>
    <property type="molecule type" value="Genomic_DNA"/>
</dbReference>
<dbReference type="EMBL" id="AF300413">
    <property type="protein sequence ID" value="AAK97894.1"/>
    <property type="status" value="JOINED"/>
    <property type="molecule type" value="Genomic_DNA"/>
</dbReference>
<dbReference type="EMBL" id="AF300415">
    <property type="protein sequence ID" value="AAK97895.1"/>
    <property type="molecule type" value="Genomic_DNA"/>
</dbReference>
<dbReference type="EMBL" id="AF300417">
    <property type="protein sequence ID" value="AAK97896.1"/>
    <property type="molecule type" value="Genomic_DNA"/>
</dbReference>
<dbReference type="EMBL" id="AF300416">
    <property type="protein sequence ID" value="AAK97896.1"/>
    <property type="status" value="JOINED"/>
    <property type="molecule type" value="Genomic_DNA"/>
</dbReference>
<dbReference type="EMBL" id="AF300419">
    <property type="protein sequence ID" value="AAK97897.1"/>
    <property type="molecule type" value="Genomic_DNA"/>
</dbReference>
<dbReference type="EMBL" id="AF300418">
    <property type="protein sequence ID" value="AAK97897.1"/>
    <property type="status" value="JOINED"/>
    <property type="molecule type" value="Genomic_DNA"/>
</dbReference>
<dbReference type="EMBL" id="AF300421">
    <property type="protein sequence ID" value="AAK97898.1"/>
    <property type="molecule type" value="Genomic_DNA"/>
</dbReference>
<dbReference type="EMBL" id="AF300420">
    <property type="protein sequence ID" value="AAK97898.1"/>
    <property type="status" value="JOINED"/>
    <property type="molecule type" value="Genomic_DNA"/>
</dbReference>
<dbReference type="SMR" id="Q95NT6"/>
<dbReference type="GlyCosmos" id="Q95NT6">
    <property type="glycosylation" value="8 sites, No reported glycans"/>
</dbReference>
<dbReference type="eggNOG" id="ENOG502R627">
    <property type="taxonomic scope" value="Eukaryota"/>
</dbReference>
<dbReference type="OrthoDB" id="6134459at2759"/>
<dbReference type="GO" id="GO:0005886">
    <property type="term" value="C:plasma membrane"/>
    <property type="evidence" value="ECO:0007669"/>
    <property type="project" value="UniProtKB-SubCell"/>
</dbReference>
<dbReference type="GO" id="GO:0008528">
    <property type="term" value="F:G protein-coupled peptide receptor activity"/>
    <property type="evidence" value="ECO:0007669"/>
    <property type="project" value="TreeGrafter"/>
</dbReference>
<dbReference type="GO" id="GO:0007166">
    <property type="term" value="P:cell surface receptor signaling pathway"/>
    <property type="evidence" value="ECO:0007669"/>
    <property type="project" value="InterPro"/>
</dbReference>
<dbReference type="CDD" id="cd15039">
    <property type="entry name" value="7tmB3_Methuselah-like"/>
    <property type="match status" value="1"/>
</dbReference>
<dbReference type="CDD" id="cd00251">
    <property type="entry name" value="Mth_Ecto"/>
    <property type="match status" value="1"/>
</dbReference>
<dbReference type="FunFam" id="2.30.160.11:FF:000001">
    <property type="entry name" value="G-protein coupled receptor Mth"/>
    <property type="match status" value="1"/>
</dbReference>
<dbReference type="FunFam" id="1.20.1070.10:FF:000386">
    <property type="entry name" value="Methuselah-like 10, isoform D"/>
    <property type="match status" value="1"/>
</dbReference>
<dbReference type="Gene3D" id="2.30.160.11">
    <property type="match status" value="1"/>
</dbReference>
<dbReference type="Gene3D" id="1.20.1070.10">
    <property type="entry name" value="Rhodopsin 7-helix transmembrane proteins"/>
    <property type="match status" value="1"/>
</dbReference>
<dbReference type="InterPro" id="IPR017981">
    <property type="entry name" value="GPCR_2-like_7TM"/>
</dbReference>
<dbReference type="InterPro" id="IPR000832">
    <property type="entry name" value="GPCR_2_secretin-like"/>
</dbReference>
<dbReference type="InterPro" id="IPR044860">
    <property type="entry name" value="Methusela_ecto_dom_1"/>
</dbReference>
<dbReference type="InterPro" id="IPR010596">
    <property type="entry name" value="Methuselah_N_dom"/>
</dbReference>
<dbReference type="InterPro" id="IPR036272">
    <property type="entry name" value="Methuselah_N_sf"/>
</dbReference>
<dbReference type="InterPro" id="IPR051384">
    <property type="entry name" value="Mth_GPCR"/>
</dbReference>
<dbReference type="PANTHER" id="PTHR47154">
    <property type="entry name" value="G-PROTEIN COUPLED RECEPTOR MTH-RELATED"/>
    <property type="match status" value="1"/>
</dbReference>
<dbReference type="PANTHER" id="PTHR47154:SF2">
    <property type="entry name" value="G-PROTEIN COUPLED RECEPTOR MTH-RELATED"/>
    <property type="match status" value="1"/>
</dbReference>
<dbReference type="Pfam" id="PF00002">
    <property type="entry name" value="7tm_2"/>
    <property type="match status" value="1"/>
</dbReference>
<dbReference type="Pfam" id="PF06652">
    <property type="entry name" value="Methuselah_N"/>
    <property type="match status" value="1"/>
</dbReference>
<dbReference type="SUPFAM" id="SSF81321">
    <property type="entry name" value="Family A G protein-coupled receptor-like"/>
    <property type="match status" value="1"/>
</dbReference>
<dbReference type="SUPFAM" id="SSF63877">
    <property type="entry name" value="Methuselah ectodomain"/>
    <property type="match status" value="1"/>
</dbReference>
<dbReference type="PROSITE" id="PS50261">
    <property type="entry name" value="G_PROTEIN_RECEP_F2_4"/>
    <property type="match status" value="1"/>
</dbReference>
<name>MTH2_DROYA</name>